<gene>
    <name evidence="1" type="primary">ccsB</name>
    <name evidence="1" type="synonym">ccs1</name>
    <name type="ordered locus">tll0683</name>
</gene>
<sequence length="442" mass="48508">MINAPVFRRVLALLGDLRLAILLLLVIAIASMAGTVIEQGQSLSFYQANYPENPALFGFLSWRVLLALGLDHVYRTPWYLTLLVLFGASLTACTLTRQVPALTTAQRWHYYQEPRQFTKLALSTTIPQGSLTALATALRAKGYRVWQTDTQLYARKGLVGRLGPIVVHASMLLILLGGILGALTGFMAQELIPSGETVHLQHIVEAGPLARIPQDWSVKVNRFWIDYTDAGEIDQFYSDLSIQDAKGQEVKRGTIHVNRPLRYGGVSLYQADWGIAAIRFRLNRSPVLQLPMAPLDTGGKGRLWGTWLPTRPDLSAGVSLIARDLQGTVLLYGPKGEFLTSLRTGMSTEVNGVTLTLVELVGSTGLQIKADPGIPLFYAGFALLMAGVIMSYVSHSQVWGLQENQRLYLGGRTNRAQLAFEQELVAIARELAPPSQTTAVDL</sequence>
<proteinExistence type="inferred from homology"/>
<accession>Q8DL16</accession>
<feature type="chain" id="PRO_0000363625" description="Cytochrome c biogenesis protein CcsB">
    <location>
        <begin position="1"/>
        <end position="442"/>
    </location>
</feature>
<feature type="transmembrane region" description="Helical" evidence="1">
    <location>
        <begin position="17"/>
        <end position="37"/>
    </location>
</feature>
<feature type="transmembrane region" description="Helical" evidence="1">
    <location>
        <begin position="76"/>
        <end position="96"/>
    </location>
</feature>
<feature type="transmembrane region" description="Helical" evidence="1">
    <location>
        <begin position="162"/>
        <end position="182"/>
    </location>
</feature>
<comment type="function">
    <text evidence="1">Required during biogenesis of c-type cytochromes (cytochrome c6 and cytochrome f) at the step of heme attachment.</text>
</comment>
<comment type="subunit">
    <text evidence="1">May interact with CcsA.</text>
</comment>
<comment type="subcellular location">
    <subcellularLocation>
        <location evidence="1">Cellular thylakoid membrane</location>
        <topology evidence="1">Multi-pass membrane protein</topology>
    </subcellularLocation>
</comment>
<comment type="similarity">
    <text evidence="1">Belongs to the Ccs1/CcsB family.</text>
</comment>
<evidence type="ECO:0000255" key="1">
    <source>
        <dbReference type="HAMAP-Rule" id="MF_01392"/>
    </source>
</evidence>
<name>CCS1_THEVB</name>
<organism>
    <name type="scientific">Thermosynechococcus vestitus (strain NIES-2133 / IAM M-273 / BP-1)</name>
    <dbReference type="NCBI Taxonomy" id="197221"/>
    <lineage>
        <taxon>Bacteria</taxon>
        <taxon>Bacillati</taxon>
        <taxon>Cyanobacteriota</taxon>
        <taxon>Cyanophyceae</taxon>
        <taxon>Acaryochloridales</taxon>
        <taxon>Thermosynechococcaceae</taxon>
        <taxon>Thermosynechococcus</taxon>
    </lineage>
</organism>
<protein>
    <recommendedName>
        <fullName evidence="1">Cytochrome c biogenesis protein CcsB</fullName>
    </recommendedName>
</protein>
<dbReference type="EMBL" id="BA000039">
    <property type="protein sequence ID" value="BAC08234.1"/>
    <property type="molecule type" value="Genomic_DNA"/>
</dbReference>
<dbReference type="RefSeq" id="NP_681472.1">
    <property type="nucleotide sequence ID" value="NC_004113.1"/>
</dbReference>
<dbReference type="RefSeq" id="WP_011056530.1">
    <property type="nucleotide sequence ID" value="NC_004113.1"/>
</dbReference>
<dbReference type="STRING" id="197221.gene:10747273"/>
<dbReference type="EnsemblBacteria" id="BAC08234">
    <property type="protein sequence ID" value="BAC08234"/>
    <property type="gene ID" value="BAC08234"/>
</dbReference>
<dbReference type="KEGG" id="tel:tll0683"/>
<dbReference type="PATRIC" id="fig|197221.4.peg.722"/>
<dbReference type="eggNOG" id="COG1333">
    <property type="taxonomic scope" value="Bacteria"/>
</dbReference>
<dbReference type="Proteomes" id="UP000000440">
    <property type="component" value="Chromosome"/>
</dbReference>
<dbReference type="GO" id="GO:0031676">
    <property type="term" value="C:plasma membrane-derived thylakoid membrane"/>
    <property type="evidence" value="ECO:0007669"/>
    <property type="project" value="UniProtKB-SubCell"/>
</dbReference>
<dbReference type="GO" id="GO:0017004">
    <property type="term" value="P:cytochrome complex assembly"/>
    <property type="evidence" value="ECO:0007669"/>
    <property type="project" value="UniProtKB-UniRule"/>
</dbReference>
<dbReference type="HAMAP" id="MF_01392">
    <property type="entry name" value="CytC_Ccs1"/>
    <property type="match status" value="1"/>
</dbReference>
<dbReference type="InterPro" id="IPR023494">
    <property type="entry name" value="Cyt_c_bgen_Ccs1/CcsB/ResB"/>
</dbReference>
<dbReference type="InterPro" id="IPR007816">
    <property type="entry name" value="ResB-like_domain"/>
</dbReference>
<dbReference type="PANTHER" id="PTHR31566">
    <property type="entry name" value="CYTOCHROME C BIOGENESIS PROTEIN CCS1, CHLOROPLASTIC"/>
    <property type="match status" value="1"/>
</dbReference>
<dbReference type="PANTHER" id="PTHR31566:SF0">
    <property type="entry name" value="CYTOCHROME C BIOGENESIS PROTEIN CCS1, CHLOROPLASTIC"/>
    <property type="match status" value="1"/>
</dbReference>
<dbReference type="Pfam" id="PF05140">
    <property type="entry name" value="ResB"/>
    <property type="match status" value="2"/>
</dbReference>
<reference key="1">
    <citation type="journal article" date="2002" name="DNA Res.">
        <title>Complete genome structure of the thermophilic cyanobacterium Thermosynechococcus elongatus BP-1.</title>
        <authorList>
            <person name="Nakamura Y."/>
            <person name="Kaneko T."/>
            <person name="Sato S."/>
            <person name="Ikeuchi M."/>
            <person name="Katoh H."/>
            <person name="Sasamoto S."/>
            <person name="Watanabe A."/>
            <person name="Iriguchi M."/>
            <person name="Kawashima K."/>
            <person name="Kimura T."/>
            <person name="Kishida Y."/>
            <person name="Kiyokawa C."/>
            <person name="Kohara M."/>
            <person name="Matsumoto M."/>
            <person name="Matsuno A."/>
            <person name="Nakazaki N."/>
            <person name="Shimpo S."/>
            <person name="Sugimoto M."/>
            <person name="Takeuchi C."/>
            <person name="Yamada M."/>
            <person name="Tabata S."/>
        </authorList>
    </citation>
    <scope>NUCLEOTIDE SEQUENCE [LARGE SCALE GENOMIC DNA]</scope>
    <source>
        <strain>NIES-2133 / IAM M-273 / BP-1</strain>
    </source>
</reference>
<keyword id="KW-0201">Cytochrome c-type biogenesis</keyword>
<keyword id="KW-0472">Membrane</keyword>
<keyword id="KW-1185">Reference proteome</keyword>
<keyword id="KW-0793">Thylakoid</keyword>
<keyword id="KW-0812">Transmembrane</keyword>
<keyword id="KW-1133">Transmembrane helix</keyword>